<proteinExistence type="inferred from homology"/>
<sequence>MNDYIVVKCGGSMLEQLNDVFFDCIKKLQQQYKVVIVHGGGPEIDAKLKDCNINVEKRDGLRVTPKEVMDVVQMVLCGSTNKKFVMNLQKHNLLAVGCSGCDGKLLQVQPVSEEIGYVGEVSYVETALLKGLINMNYIPVIAPIGIHDNEIYNINADTAAAGIAAALSAKELILITDVDGILHEGKLVKKTDESEIATLIEKGVITGGMIPKVQAALASLKMGVQKISIVNRTKDFTEDTGECIGTTVTRGVSIV</sequence>
<keyword id="KW-0028">Amino-acid biosynthesis</keyword>
<keyword id="KW-0055">Arginine biosynthesis</keyword>
<keyword id="KW-0067">ATP-binding</keyword>
<keyword id="KW-0963">Cytoplasm</keyword>
<keyword id="KW-0418">Kinase</keyword>
<keyword id="KW-0547">Nucleotide-binding</keyword>
<keyword id="KW-0808">Transferase</keyword>
<evidence type="ECO:0000255" key="1">
    <source>
        <dbReference type="HAMAP-Rule" id="MF_00082"/>
    </source>
</evidence>
<comment type="function">
    <text evidence="1">Catalyzes the ATP-dependent phosphorylation of N-acetyl-L-glutamate.</text>
</comment>
<comment type="catalytic activity">
    <reaction evidence="1">
        <text>N-acetyl-L-glutamate + ATP = N-acetyl-L-glutamyl 5-phosphate + ADP</text>
        <dbReference type="Rhea" id="RHEA:14629"/>
        <dbReference type="ChEBI" id="CHEBI:30616"/>
        <dbReference type="ChEBI" id="CHEBI:44337"/>
        <dbReference type="ChEBI" id="CHEBI:57936"/>
        <dbReference type="ChEBI" id="CHEBI:456216"/>
        <dbReference type="EC" id="2.7.2.8"/>
    </reaction>
</comment>
<comment type="pathway">
    <text evidence="1">Amino-acid biosynthesis; L-arginine biosynthesis; N(2)-acetyl-L-ornithine from L-glutamate: step 2/4.</text>
</comment>
<comment type="subcellular location">
    <subcellularLocation>
        <location evidence="1">Cytoplasm</location>
    </subcellularLocation>
</comment>
<comment type="similarity">
    <text evidence="1">Belongs to the acetylglutamate kinase family. ArgB subfamily.</text>
</comment>
<name>ARGB_BACAC</name>
<dbReference type="EC" id="2.7.2.8" evidence="1"/>
<dbReference type="EMBL" id="CP001215">
    <property type="protein sequence ID" value="ACP13206.1"/>
    <property type="molecule type" value="Genomic_DNA"/>
</dbReference>
<dbReference type="RefSeq" id="WP_001000910.1">
    <property type="nucleotide sequence ID" value="NC_012581.1"/>
</dbReference>
<dbReference type="SMR" id="C3LJQ7"/>
<dbReference type="KEGG" id="bah:BAMEG_4392"/>
<dbReference type="HOGENOM" id="CLU_053680_0_0_9"/>
<dbReference type="UniPathway" id="UPA00068">
    <property type="reaction ID" value="UER00107"/>
</dbReference>
<dbReference type="GO" id="GO:0005737">
    <property type="term" value="C:cytoplasm"/>
    <property type="evidence" value="ECO:0007669"/>
    <property type="project" value="UniProtKB-SubCell"/>
</dbReference>
<dbReference type="GO" id="GO:0003991">
    <property type="term" value="F:acetylglutamate kinase activity"/>
    <property type="evidence" value="ECO:0007669"/>
    <property type="project" value="UniProtKB-UniRule"/>
</dbReference>
<dbReference type="GO" id="GO:0005524">
    <property type="term" value="F:ATP binding"/>
    <property type="evidence" value="ECO:0007669"/>
    <property type="project" value="UniProtKB-UniRule"/>
</dbReference>
<dbReference type="GO" id="GO:0042450">
    <property type="term" value="P:arginine biosynthetic process via ornithine"/>
    <property type="evidence" value="ECO:0007669"/>
    <property type="project" value="UniProtKB-UniRule"/>
</dbReference>
<dbReference type="GO" id="GO:0006526">
    <property type="term" value="P:L-arginine biosynthetic process"/>
    <property type="evidence" value="ECO:0007669"/>
    <property type="project" value="UniProtKB-UniPathway"/>
</dbReference>
<dbReference type="CDD" id="cd04238">
    <property type="entry name" value="AAK_NAGK-like"/>
    <property type="match status" value="1"/>
</dbReference>
<dbReference type="Gene3D" id="3.40.1160.10">
    <property type="entry name" value="Acetylglutamate kinase-like"/>
    <property type="match status" value="1"/>
</dbReference>
<dbReference type="HAMAP" id="MF_00082">
    <property type="entry name" value="ArgB"/>
    <property type="match status" value="1"/>
</dbReference>
<dbReference type="InterPro" id="IPR036393">
    <property type="entry name" value="AceGlu_kinase-like_sf"/>
</dbReference>
<dbReference type="InterPro" id="IPR004662">
    <property type="entry name" value="AcgluKinase_fam"/>
</dbReference>
<dbReference type="InterPro" id="IPR037528">
    <property type="entry name" value="ArgB"/>
</dbReference>
<dbReference type="InterPro" id="IPR001048">
    <property type="entry name" value="Asp/Glu/Uridylate_kinase"/>
</dbReference>
<dbReference type="NCBIfam" id="TIGR00761">
    <property type="entry name" value="argB"/>
    <property type="match status" value="1"/>
</dbReference>
<dbReference type="PANTHER" id="PTHR23342">
    <property type="entry name" value="N-ACETYLGLUTAMATE SYNTHASE"/>
    <property type="match status" value="1"/>
</dbReference>
<dbReference type="PANTHER" id="PTHR23342:SF0">
    <property type="entry name" value="N-ACETYLGLUTAMATE SYNTHASE, MITOCHONDRIAL"/>
    <property type="match status" value="1"/>
</dbReference>
<dbReference type="Pfam" id="PF00696">
    <property type="entry name" value="AA_kinase"/>
    <property type="match status" value="1"/>
</dbReference>
<dbReference type="PIRSF" id="PIRSF000728">
    <property type="entry name" value="NAGK"/>
    <property type="match status" value="1"/>
</dbReference>
<dbReference type="SUPFAM" id="SSF53633">
    <property type="entry name" value="Carbamate kinase-like"/>
    <property type="match status" value="1"/>
</dbReference>
<feature type="chain" id="PRO_1000118334" description="Acetylglutamate kinase">
    <location>
        <begin position="1"/>
        <end position="255"/>
    </location>
</feature>
<feature type="binding site" evidence="1">
    <location>
        <begin position="40"/>
        <end position="41"/>
    </location>
    <ligand>
        <name>substrate</name>
    </ligand>
</feature>
<feature type="binding site" evidence="1">
    <location>
        <position position="62"/>
    </location>
    <ligand>
        <name>substrate</name>
    </ligand>
</feature>
<feature type="binding site" evidence="1">
    <location>
        <position position="153"/>
    </location>
    <ligand>
        <name>substrate</name>
    </ligand>
</feature>
<feature type="site" description="Transition state stabilizer" evidence="1">
    <location>
        <position position="8"/>
    </location>
</feature>
<feature type="site" description="Transition state stabilizer" evidence="1">
    <location>
        <position position="212"/>
    </location>
</feature>
<organism>
    <name type="scientific">Bacillus anthracis (strain CDC 684 / NRRL 3495)</name>
    <dbReference type="NCBI Taxonomy" id="568206"/>
    <lineage>
        <taxon>Bacteria</taxon>
        <taxon>Bacillati</taxon>
        <taxon>Bacillota</taxon>
        <taxon>Bacilli</taxon>
        <taxon>Bacillales</taxon>
        <taxon>Bacillaceae</taxon>
        <taxon>Bacillus</taxon>
        <taxon>Bacillus cereus group</taxon>
    </lineage>
</organism>
<gene>
    <name evidence="1" type="primary">argB</name>
    <name type="ordered locus">BAMEG_4392</name>
</gene>
<protein>
    <recommendedName>
        <fullName evidence="1">Acetylglutamate kinase</fullName>
        <ecNumber evidence="1">2.7.2.8</ecNumber>
    </recommendedName>
    <alternativeName>
        <fullName evidence="1">N-acetyl-L-glutamate 5-phosphotransferase</fullName>
    </alternativeName>
    <alternativeName>
        <fullName evidence="1">NAG kinase</fullName>
        <shortName evidence="1">NAGK</shortName>
    </alternativeName>
</protein>
<accession>C3LJQ7</accession>
<reference key="1">
    <citation type="submission" date="2008-10" db="EMBL/GenBank/DDBJ databases">
        <title>Genome sequence of Bacillus anthracis str. CDC 684.</title>
        <authorList>
            <person name="Dodson R.J."/>
            <person name="Munk A.C."/>
            <person name="Brettin T."/>
            <person name="Bruce D."/>
            <person name="Detter C."/>
            <person name="Tapia R."/>
            <person name="Han C."/>
            <person name="Sutton G."/>
            <person name="Sims D."/>
        </authorList>
    </citation>
    <scope>NUCLEOTIDE SEQUENCE [LARGE SCALE GENOMIC DNA]</scope>
    <source>
        <strain>CDC 684 / NRRL 3495</strain>
    </source>
</reference>